<organism>
    <name type="scientific">Staphylococcus aureus (strain Mu3 / ATCC 700698)</name>
    <dbReference type="NCBI Taxonomy" id="418127"/>
    <lineage>
        <taxon>Bacteria</taxon>
        <taxon>Bacillati</taxon>
        <taxon>Bacillota</taxon>
        <taxon>Bacilli</taxon>
        <taxon>Bacillales</taxon>
        <taxon>Staphylococcaceae</taxon>
        <taxon>Staphylococcus</taxon>
    </lineage>
</organism>
<feature type="chain" id="PRO_1000024505" description="UPF0316 protein SAHV_1896">
    <location>
        <begin position="1"/>
        <end position="200"/>
    </location>
</feature>
<feature type="transmembrane region" description="Helical" evidence="1">
    <location>
        <begin position="8"/>
        <end position="28"/>
    </location>
</feature>
<feature type="transmembrane region" description="Helical" evidence="1">
    <location>
        <begin position="40"/>
        <end position="60"/>
    </location>
</feature>
<feature type="transmembrane region" description="Helical" evidence="1">
    <location>
        <begin position="66"/>
        <end position="86"/>
    </location>
</feature>
<name>Y1896_STAA1</name>
<keyword id="KW-1003">Cell membrane</keyword>
<keyword id="KW-0472">Membrane</keyword>
<keyword id="KW-0812">Transmembrane</keyword>
<keyword id="KW-1133">Transmembrane helix</keyword>
<dbReference type="EMBL" id="AP009324">
    <property type="protein sequence ID" value="BAF78779.1"/>
    <property type="molecule type" value="Genomic_DNA"/>
</dbReference>
<dbReference type="RefSeq" id="WP_000011542.1">
    <property type="nucleotide sequence ID" value="NZ_CTYB01000056.1"/>
</dbReference>
<dbReference type="SMR" id="A7X441"/>
<dbReference type="KEGG" id="saw:SAHV_1896"/>
<dbReference type="HOGENOM" id="CLU_106166_1_0_9"/>
<dbReference type="GO" id="GO:0005886">
    <property type="term" value="C:plasma membrane"/>
    <property type="evidence" value="ECO:0007669"/>
    <property type="project" value="UniProtKB-SubCell"/>
</dbReference>
<dbReference type="CDD" id="cd16381">
    <property type="entry name" value="YitT_C_like_1"/>
    <property type="match status" value="1"/>
</dbReference>
<dbReference type="HAMAP" id="MF_01515">
    <property type="entry name" value="UPF0316"/>
    <property type="match status" value="1"/>
</dbReference>
<dbReference type="InterPro" id="IPR019264">
    <property type="entry name" value="DUF2179"/>
</dbReference>
<dbReference type="InterPro" id="IPR044035">
    <property type="entry name" value="DUF5698"/>
</dbReference>
<dbReference type="InterPro" id="IPR022930">
    <property type="entry name" value="UPF0316"/>
</dbReference>
<dbReference type="NCBIfam" id="NF003190">
    <property type="entry name" value="PRK04164.1-1"/>
    <property type="match status" value="1"/>
</dbReference>
<dbReference type="NCBIfam" id="NF003194">
    <property type="entry name" value="PRK04164.1-5"/>
    <property type="match status" value="1"/>
</dbReference>
<dbReference type="PANTHER" id="PTHR40060">
    <property type="entry name" value="UPF0316 PROTEIN YEBE"/>
    <property type="match status" value="1"/>
</dbReference>
<dbReference type="PANTHER" id="PTHR40060:SF1">
    <property type="entry name" value="UPF0316 PROTEIN YEBE"/>
    <property type="match status" value="1"/>
</dbReference>
<dbReference type="Pfam" id="PF10035">
    <property type="entry name" value="DUF2179"/>
    <property type="match status" value="1"/>
</dbReference>
<dbReference type="Pfam" id="PF18955">
    <property type="entry name" value="DUF5698"/>
    <property type="match status" value="1"/>
</dbReference>
<comment type="subcellular location">
    <subcellularLocation>
        <location evidence="1">Cell membrane</location>
        <topology evidence="1">Multi-pass membrane protein</topology>
    </subcellularLocation>
</comment>
<comment type="similarity">
    <text evidence="1">Belongs to the UPF0316 family.</text>
</comment>
<reference key="1">
    <citation type="journal article" date="2008" name="Antimicrob. Agents Chemother.">
        <title>Mutated response regulator graR is responsible for phenotypic conversion of Staphylococcus aureus from heterogeneous vancomycin-intermediate resistance to vancomycin-intermediate resistance.</title>
        <authorList>
            <person name="Neoh H.-M."/>
            <person name="Cui L."/>
            <person name="Yuzawa H."/>
            <person name="Takeuchi F."/>
            <person name="Matsuo M."/>
            <person name="Hiramatsu K."/>
        </authorList>
    </citation>
    <scope>NUCLEOTIDE SEQUENCE [LARGE SCALE GENOMIC DNA]</scope>
    <source>
        <strain>Mu3 / ATCC 700698</strain>
    </source>
</reference>
<evidence type="ECO:0000255" key="1">
    <source>
        <dbReference type="HAMAP-Rule" id="MF_01515"/>
    </source>
</evidence>
<sequence>MSFVTENPWLMVLTIFIINVCYVTFLTMRTILTLKGYRYIAASVSFLEVLVYIVGLGLVMSNLDHIQNIIAYAFGFSIGIIVGMKIEEKLALGYTVVNVTSAEYELDLPNELRNLGYGVTHYAAFGRDGSRMVMQILTPRKYERKLMDTIKNLDPKAFIIAYEPRNIHGGFWTKGIRRRKLKDYEPEELESVVEHEIQSK</sequence>
<protein>
    <recommendedName>
        <fullName evidence="1">UPF0316 protein SAHV_1896</fullName>
    </recommendedName>
</protein>
<gene>
    <name type="ordered locus">SAHV_1896</name>
</gene>
<accession>A7X441</accession>
<proteinExistence type="inferred from homology"/>